<sequence>MAGFKKKVYTSGLGTAEPYAYLSKPDYGNEERGFGNPRGVYKVDLTLSNKDPRCQAMVDEIVKTHEEAYAAAVEEFEANPPQVQRGKKPLTPYEGDMPFFDNGDGTTTFKFKCYASFQDKKTKETKHINLVVVDSKGKKIQEVPIIGGGSKLKVKYSLVPYKWNTAVGASVKLQLESVMLVELATFGGGGEDEWADEVEDGGYTASESRQSRDEQEWQEDEHEETPDDDEDF</sequence>
<feature type="chain" id="PRO_0000106482" description="Single-stranded DNA-binding protein">
    <location>
        <begin position="1"/>
        <end position="232"/>
    </location>
</feature>
<feature type="region of interest" description="Disordered" evidence="2">
    <location>
        <begin position="190"/>
        <end position="232"/>
    </location>
</feature>
<feature type="region of interest" description="Dimerization and interaction with the viral DNA polymerase and helicase" evidence="1">
    <location>
        <begin position="213"/>
        <end position="232"/>
    </location>
</feature>
<feature type="compositionally biased region" description="Acidic residues" evidence="2">
    <location>
        <begin position="190"/>
        <end position="200"/>
    </location>
</feature>
<feature type="compositionally biased region" description="Acidic residues" evidence="2">
    <location>
        <begin position="216"/>
        <end position="232"/>
    </location>
</feature>
<evidence type="ECO:0000255" key="1">
    <source>
        <dbReference type="HAMAP-Rule" id="MF_04153"/>
    </source>
</evidence>
<evidence type="ECO:0000256" key="2">
    <source>
        <dbReference type="SAM" id="MobiDB-lite"/>
    </source>
</evidence>
<gene>
    <name type="primary">2.5</name>
</gene>
<keyword id="KW-0227">DNA damage</keyword>
<keyword id="KW-0234">DNA repair</keyword>
<keyword id="KW-0235">DNA replication</keyword>
<keyword id="KW-0238">DNA-binding</keyword>
<keyword id="KW-1194">Viral DNA replication</keyword>
<name>SSB_BPT3</name>
<organism>
    <name type="scientific">Enterobacteria phage T3</name>
    <name type="common">Bacteriophage T3</name>
    <dbReference type="NCBI Taxonomy" id="10759"/>
    <lineage>
        <taxon>Viruses</taxon>
        <taxon>Duplodnaviria</taxon>
        <taxon>Heunggongvirae</taxon>
        <taxon>Uroviricota</taxon>
        <taxon>Caudoviricetes</taxon>
        <taxon>Autographiviridae</taxon>
        <taxon>Studiervirinae</taxon>
        <taxon>Teetrevirus</taxon>
        <taxon>Teetrevirus T3</taxon>
    </lineage>
</organism>
<protein>
    <recommendedName>
        <fullName evidence="1">Single-stranded DNA-binding protein</fullName>
        <shortName evidence="1">SSB protein</shortName>
    </recommendedName>
    <alternativeName>
        <fullName evidence="1">Helix-destabilizing protein</fullName>
    </alternativeName>
</protein>
<comment type="function">
    <text evidence="1">Single-stranded DNA-binding protein that participates in viral DNA replication, formation of concatemers, recombination and repair of double-stranded breaks. Coats the lagging-strand ssDNA as the replication fork advances and stimulates the activities of viral DNA polymerase and primase/helicase. Coordinates simultaneous synthesis of leading- and lagging-strands. Together with DNA primase/helicase, promotes pairing of two homologous DNA molecules containing complementary single-stranded regions and mediates homologous DNA strand exchange. Also promotes the formation of joint molecules. Disrupts loops, hairpins and other secondary structures present on ssDNA to reduce and eliminate pausing of viral DNA polymerase at specific sites during elongation.</text>
</comment>
<comment type="subunit">
    <text evidence="1">Homodimer. Interacts (via C-terminus) with the viral DNA polymerase. Interacts with the viral helicase/primase. Part of the replicase complex that includes the DNA polymerase, the primase/helicase and the single-stranded DNA binding protein.</text>
</comment>
<comment type="domain">
    <text evidence="1">The acidic C-terminus is involved in modulating the ssDNA binding properties. It is also required for dimer formation and for interactions with the viral DNA polymerase and the helicase.</text>
</comment>
<comment type="similarity">
    <text evidence="1">Belongs to the Teseptimavirus single-stranded DNA-binding protein family.</text>
</comment>
<reference key="1">
    <citation type="journal article" date="1989" name="J. Mol. Biol.">
        <title>Sequence of bacteriophage T3 DNA from gene 2.5 through gene 9.</title>
        <authorList>
            <person name="Beck P.J."/>
            <person name="Gonzalez S."/>
            <person name="Ward C.L."/>
            <person name="Molineux I.J."/>
        </authorList>
    </citation>
    <scope>NUCLEOTIDE SEQUENCE [GENOMIC DNA]</scope>
    <source>
        <strain>Luria</strain>
    </source>
</reference>
<reference key="2">
    <citation type="journal article" date="1987" name="J. Mol. Biol.">
        <title>Sequence of a conditionally essential region of bacteriophage T3, including the primary origin of DNA replication.</title>
        <authorList>
            <person name="Schmitt M.P."/>
            <person name="Beck P.J."/>
            <person name="Kearney C.A."/>
            <person name="Spence J.L."/>
            <person name="Digiovanni D."/>
            <person name="Condreay J.P."/>
            <person name="Molineux I.J."/>
        </authorList>
    </citation>
    <scope>NUCLEOTIDE SEQUENCE [GENOMIC DNA] OF 1-181</scope>
</reference>
<dbReference type="EMBL" id="X17255">
    <property type="protein sequence ID" value="CAA35131.1"/>
    <property type="molecule type" value="Genomic_DNA"/>
</dbReference>
<dbReference type="EMBL" id="X05031">
    <property type="protein sequence ID" value="CAA28706.1"/>
    <property type="molecule type" value="Genomic_DNA"/>
</dbReference>
<dbReference type="PIR" id="S07504">
    <property type="entry name" value="S07504"/>
</dbReference>
<dbReference type="RefSeq" id="NP_523311.1">
    <property type="nucleotide sequence ID" value="NC_003298.1"/>
</dbReference>
<dbReference type="SMR" id="P20313"/>
<dbReference type="KEGG" id="vg:927413"/>
<dbReference type="OrthoDB" id="10081at10239"/>
<dbReference type="GO" id="GO:0003697">
    <property type="term" value="F:single-stranded DNA binding"/>
    <property type="evidence" value="ECO:0007669"/>
    <property type="project" value="UniProtKB-UniRule"/>
</dbReference>
<dbReference type="GO" id="GO:0006310">
    <property type="term" value="P:DNA recombination"/>
    <property type="evidence" value="ECO:0007669"/>
    <property type="project" value="UniProtKB-UniRule"/>
</dbReference>
<dbReference type="GO" id="GO:0006281">
    <property type="term" value="P:DNA repair"/>
    <property type="evidence" value="ECO:0007669"/>
    <property type="project" value="UniProtKB-UniRule"/>
</dbReference>
<dbReference type="GO" id="GO:0006260">
    <property type="term" value="P:DNA replication"/>
    <property type="evidence" value="ECO:0007669"/>
    <property type="project" value="UniProtKB-KW"/>
</dbReference>
<dbReference type="GO" id="GO:0039693">
    <property type="term" value="P:viral DNA genome replication"/>
    <property type="evidence" value="ECO:0007669"/>
    <property type="project" value="UniProtKB-UniRule"/>
</dbReference>
<dbReference type="Gene3D" id="2.40.50.140">
    <property type="entry name" value="Nucleic acid-binding proteins"/>
    <property type="match status" value="1"/>
</dbReference>
<dbReference type="HAMAP" id="MF_04153">
    <property type="entry name" value="SSB_T7"/>
    <property type="match status" value="1"/>
</dbReference>
<dbReference type="InterPro" id="IPR012340">
    <property type="entry name" value="NA-bd_OB-fold"/>
</dbReference>
<dbReference type="InterPro" id="IPR049476">
    <property type="entry name" value="SBB_BPT7"/>
</dbReference>
<dbReference type="InterPro" id="IPR016411">
    <property type="entry name" value="SSB_T7"/>
</dbReference>
<dbReference type="Pfam" id="PF21265">
    <property type="entry name" value="SBB_T7"/>
    <property type="match status" value="1"/>
</dbReference>
<dbReference type="PIRSF" id="PIRSF004311">
    <property type="entry name" value="Helix_destablz_SSB_T7"/>
    <property type="match status" value="1"/>
</dbReference>
<dbReference type="SUPFAM" id="SSF50249">
    <property type="entry name" value="Nucleic acid-binding proteins"/>
    <property type="match status" value="1"/>
</dbReference>
<accession>P20313</accession>
<proteinExistence type="inferred from homology"/>
<organismHost>
    <name type="scientific">Escherichia coli</name>
    <dbReference type="NCBI Taxonomy" id="562"/>
</organismHost>